<keyword id="KW-1003">Cell membrane</keyword>
<keyword id="KW-0472">Membrane</keyword>
<keyword id="KW-1185">Reference proteome</keyword>
<keyword id="KW-0812">Transmembrane</keyword>
<keyword id="KW-1133">Transmembrane helix</keyword>
<comment type="subunit">
    <text evidence="1">Homodimer and heterodimers.</text>
</comment>
<comment type="subcellular location">
    <subcellularLocation>
        <location evidence="1">Cell membrane</location>
        <topology evidence="1">Multi-pass membrane protein</topology>
    </subcellularLocation>
</comment>
<comment type="similarity">
    <text evidence="4">Belongs to the Casparian strip membrane proteins (CASP) family.</text>
</comment>
<organism>
    <name type="scientific">Arabidopsis lyrata subsp. lyrata</name>
    <name type="common">Lyre-leaved rock-cress</name>
    <dbReference type="NCBI Taxonomy" id="81972"/>
    <lineage>
        <taxon>Eukaryota</taxon>
        <taxon>Viridiplantae</taxon>
        <taxon>Streptophyta</taxon>
        <taxon>Embryophyta</taxon>
        <taxon>Tracheophyta</taxon>
        <taxon>Spermatophyta</taxon>
        <taxon>Magnoliopsida</taxon>
        <taxon>eudicotyledons</taxon>
        <taxon>Gunneridae</taxon>
        <taxon>Pentapetalae</taxon>
        <taxon>rosids</taxon>
        <taxon>malvids</taxon>
        <taxon>Brassicales</taxon>
        <taxon>Brassicaceae</taxon>
        <taxon>Camelineae</taxon>
        <taxon>Arabidopsis</taxon>
    </lineage>
</organism>
<evidence type="ECO:0000250" key="1"/>
<evidence type="ECO:0000255" key="2"/>
<evidence type="ECO:0000256" key="3">
    <source>
        <dbReference type="SAM" id="MobiDB-lite"/>
    </source>
</evidence>
<evidence type="ECO:0000305" key="4"/>
<reference key="1">
    <citation type="journal article" date="2011" name="Nat. Genet.">
        <title>The Arabidopsis lyrata genome sequence and the basis of rapid genome size change.</title>
        <authorList>
            <person name="Hu T.T."/>
            <person name="Pattyn P."/>
            <person name="Bakker E.G."/>
            <person name="Cao J."/>
            <person name="Cheng J.-F."/>
            <person name="Clark R.M."/>
            <person name="Fahlgren N."/>
            <person name="Fawcett J.A."/>
            <person name="Grimwood J."/>
            <person name="Gundlach H."/>
            <person name="Haberer G."/>
            <person name="Hollister J.D."/>
            <person name="Ossowski S."/>
            <person name="Ottilar R.P."/>
            <person name="Salamov A.A."/>
            <person name="Schneeberger K."/>
            <person name="Spannagl M."/>
            <person name="Wang X."/>
            <person name="Yang L."/>
            <person name="Nasrallah M.E."/>
            <person name="Bergelson J."/>
            <person name="Carrington J.C."/>
            <person name="Gaut B.S."/>
            <person name="Schmutz J."/>
            <person name="Mayer K.F.X."/>
            <person name="Van de Peer Y."/>
            <person name="Grigoriev I.V."/>
            <person name="Nordborg M."/>
            <person name="Weigel D."/>
            <person name="Guo Y.-L."/>
        </authorList>
    </citation>
    <scope>NUCLEOTIDE SEQUENCE [LARGE SCALE GENOMIC DNA]</scope>
    <source>
        <strain>cv. MN47</strain>
    </source>
</reference>
<reference key="2">
    <citation type="journal article" date="2014" name="Plant Physiol.">
        <title>Functional and evolutionary analysis of the CASPARIAN STRIP MEMBRANE DOMAIN PROTEIN family.</title>
        <authorList>
            <person name="Roppolo D."/>
            <person name="Boeckmann B."/>
            <person name="Pfister A."/>
            <person name="Boutet E."/>
            <person name="Rubio M.C."/>
            <person name="Denervaud-Tendon V."/>
            <person name="Vermeer J.E."/>
            <person name="Gheyselinck J."/>
            <person name="Xenarios I."/>
            <person name="Geldner N."/>
        </authorList>
    </citation>
    <scope>GENE FAMILY</scope>
    <scope>NOMENCLATURE</scope>
</reference>
<protein>
    <recommendedName>
        <fullName>CASP-like protein 1D2</fullName>
        <shortName>AlCASPL1D2</shortName>
    </recommendedName>
</protein>
<feature type="chain" id="PRO_0000412012" description="CASP-like protein 1D2">
    <location>
        <begin position="1"/>
        <end position="200"/>
    </location>
</feature>
<feature type="topological domain" description="Cytoplasmic" evidence="2">
    <location>
        <begin position="1"/>
        <end position="36"/>
    </location>
</feature>
<feature type="transmembrane region" description="Helical" evidence="2">
    <location>
        <begin position="37"/>
        <end position="57"/>
    </location>
</feature>
<feature type="topological domain" description="Extracellular" evidence="2">
    <location>
        <begin position="58"/>
        <end position="85"/>
    </location>
</feature>
<feature type="transmembrane region" description="Helical" evidence="2">
    <location>
        <begin position="86"/>
        <end position="106"/>
    </location>
</feature>
<feature type="topological domain" description="Cytoplasmic" evidence="2">
    <location>
        <begin position="107"/>
        <end position="129"/>
    </location>
</feature>
<feature type="transmembrane region" description="Helical" evidence="2">
    <location>
        <begin position="130"/>
        <end position="150"/>
    </location>
</feature>
<feature type="topological domain" description="Extracellular" evidence="2">
    <location>
        <begin position="151"/>
        <end position="171"/>
    </location>
</feature>
<feature type="transmembrane region" description="Helical" evidence="2">
    <location>
        <begin position="172"/>
        <end position="192"/>
    </location>
</feature>
<feature type="topological domain" description="Cytoplasmic" evidence="2">
    <location>
        <begin position="193"/>
        <end position="200"/>
    </location>
</feature>
<feature type="region of interest" description="Disordered" evidence="3">
    <location>
        <begin position="1"/>
        <end position="26"/>
    </location>
</feature>
<accession>D7L5G6</accession>
<gene>
    <name type="ORF">ARALYDRAFT_477942</name>
</gene>
<name>CSPLD_ARALL</name>
<proteinExistence type="inferred from homology"/>
<sequence length="200" mass="21191">MASTENPDPETGKSEPIPASATTPPPSAASFLDCRKIDVIIRVLLFSATLTALIVMVTSDQTEKTQLPGVSSPAPVSAEFNDSPAFIFFVVALVVTSFYALMSTLVSISLLLKPEFTARVSVYLASLDMVMLGILASATGTAGGVAYIALKGNKEVGWNKICNVYDKFCRYIATSLALSLFATLLLLVLSICSALSKRTP</sequence>
<dbReference type="EMBL" id="GL348715">
    <property type="protein sequence ID" value="EFH60835.1"/>
    <property type="molecule type" value="Genomic_DNA"/>
</dbReference>
<dbReference type="RefSeq" id="XP_002884576.1">
    <property type="nucleotide sequence ID" value="XM_002884530.1"/>
</dbReference>
<dbReference type="SMR" id="D7L5G6"/>
<dbReference type="STRING" id="81972.D7L5G6"/>
<dbReference type="EnsemblPlants" id="fgenesh2_kg.3__643__AT3G06390.1">
    <property type="protein sequence ID" value="fgenesh2_kg.3__643__AT3G06390.1"/>
    <property type="gene ID" value="fgenesh2_kg.3__643__AT3G06390.1"/>
</dbReference>
<dbReference type="Gramene" id="fgenesh2_kg.3__643__AT3G06390.1">
    <property type="protein sequence ID" value="fgenesh2_kg.3__643__AT3G06390.1"/>
    <property type="gene ID" value="fgenesh2_kg.3__643__AT3G06390.1"/>
</dbReference>
<dbReference type="eggNOG" id="ENOG502S2UF">
    <property type="taxonomic scope" value="Eukaryota"/>
</dbReference>
<dbReference type="HOGENOM" id="CLU_066104_1_2_1"/>
<dbReference type="OrthoDB" id="1926504at2759"/>
<dbReference type="Proteomes" id="UP000008694">
    <property type="component" value="Unassembled WGS sequence"/>
</dbReference>
<dbReference type="GO" id="GO:0005886">
    <property type="term" value="C:plasma membrane"/>
    <property type="evidence" value="ECO:0007669"/>
    <property type="project" value="UniProtKB-SubCell"/>
</dbReference>
<dbReference type="InterPro" id="IPR006459">
    <property type="entry name" value="CASP/CASPL"/>
</dbReference>
<dbReference type="InterPro" id="IPR006702">
    <property type="entry name" value="CASP_dom"/>
</dbReference>
<dbReference type="InterPro" id="IPR044173">
    <property type="entry name" value="CASPL"/>
</dbReference>
<dbReference type="NCBIfam" id="TIGR01569">
    <property type="entry name" value="A_tha_TIGR01569"/>
    <property type="match status" value="1"/>
</dbReference>
<dbReference type="PANTHER" id="PTHR36488">
    <property type="entry name" value="CASP-LIKE PROTEIN 1U1"/>
    <property type="match status" value="1"/>
</dbReference>
<dbReference type="PANTHER" id="PTHR36488:SF8">
    <property type="entry name" value="CASP-LIKE PROTEIN 1U1"/>
    <property type="match status" value="1"/>
</dbReference>
<dbReference type="Pfam" id="PF04535">
    <property type="entry name" value="CASP_dom"/>
    <property type="match status" value="1"/>
</dbReference>